<sequence>DVGKFK</sequence>
<comment type="subcellular location">
    <subcellularLocation>
        <location evidence="1">Secreted</location>
        <location evidence="1">Cell wall</location>
    </subcellularLocation>
</comment>
<organism>
    <name type="scientific">Arabidopsis thaliana</name>
    <name type="common">Mouse-ear cress</name>
    <dbReference type="NCBI Taxonomy" id="3702"/>
    <lineage>
        <taxon>Eukaryota</taxon>
        <taxon>Viridiplantae</taxon>
        <taxon>Streptophyta</taxon>
        <taxon>Embryophyta</taxon>
        <taxon>Tracheophyta</taxon>
        <taxon>Spermatophyta</taxon>
        <taxon>Magnoliopsida</taxon>
        <taxon>eudicotyledons</taxon>
        <taxon>Gunneridae</taxon>
        <taxon>Pentapetalae</taxon>
        <taxon>rosids</taxon>
        <taxon>malvids</taxon>
        <taxon>Brassicales</taxon>
        <taxon>Brassicaceae</taxon>
        <taxon>Camelineae</taxon>
        <taxon>Arabidopsis</taxon>
    </lineage>
</organism>
<name>CWP27_ARATH</name>
<evidence type="ECO:0000269" key="1">
    <source>
    </source>
</evidence>
<evidence type="ECO:0000303" key="2">
    <source>
    </source>
</evidence>
<evidence type="ECO:0000305" key="3"/>
<feature type="chain" id="PRO_0000079708" description="60 kDa cell wall protein">
    <location>
        <begin position="1"/>
        <end position="6" status="greater than"/>
    </location>
</feature>
<feature type="non-terminal residue" evidence="2">
    <location>
        <position position="6"/>
    </location>
</feature>
<accession>P80847</accession>
<proteinExistence type="evidence at protein level"/>
<reference evidence="3" key="1">
    <citation type="journal article" date="1997" name="J. Biol. Chem.">
        <title>Differential extraction and protein sequencing reveals major differences in patterns of primary cell wall proteins from plants.</title>
        <authorList>
            <person name="Robertson D."/>
            <person name="Mitchell G.P."/>
            <person name="Gilroy J.S."/>
            <person name="Gerrish C."/>
            <person name="Bolwell G.P."/>
            <person name="Slabas A.R."/>
        </authorList>
    </citation>
    <scope>PROTEIN SEQUENCE</scope>
    <scope>SUBCELLULAR LOCATION</scope>
    <source>
        <strain>cv. Landsberg erecta</strain>
    </source>
</reference>
<dbReference type="GO" id="GO:0005576">
    <property type="term" value="C:extracellular region"/>
    <property type="evidence" value="ECO:0007669"/>
    <property type="project" value="UniProtKB-KW"/>
</dbReference>
<protein>
    <recommendedName>
        <fullName>60 kDa cell wall protein</fullName>
    </recommendedName>
</protein>
<keyword id="KW-0134">Cell wall</keyword>
<keyword id="KW-0903">Direct protein sequencing</keyword>
<keyword id="KW-0964">Secreted</keyword>